<sequence length="315" mass="36780">MDALLKEIEKLSQPSLQKENNDVCDLCFMQMKKISNYQLLCEECGQLKDWFEPEYNEKFTVYSRLKIVGANSSYHQRDLDKANSSDYSSLQFHHILEELKSLNVKYMDAGQKPFPIQVLKETAHSYNQVQQHRVIRSITKLQILASILRSICLKLNIACTVADAARFTQLNTKGISRGMDLLRSLFVDNKITLNVDLNPIDSFINSTYSALQIKQIHQELQEENVYNLKEIVKSFILYADEKNIGVDLNRRTVVIATMYNVLRRAYYPIEIDTVVYQCKIRKNTITRALKMYEDYYSHFKSLYEQYHLNAAKKLI</sequence>
<protein>
    <recommendedName>
        <fullName evidence="1 2">Initiation factor TFIIB homolog</fullName>
        <shortName>pC315R</shortName>
    </recommendedName>
</protein>
<name>TFIIB_ASFB7</name>
<keyword id="KW-1185">Reference proteome</keyword>
<comment type="function">
    <text evidence="2">Putative initation factor.</text>
</comment>
<comment type="similarity">
    <text evidence="3">Belongs to the asfivirus C315R family.</text>
</comment>
<reference key="1">
    <citation type="journal article" date="1995" name="Virology">
        <title>Analysis of the complete nucleotide sequence of African swine fever virus.</title>
        <authorList>
            <person name="Yanez R.J."/>
            <person name="Rodriguez J.M."/>
            <person name="Nogal M.L."/>
            <person name="Yuste L."/>
            <person name="Enriquez C."/>
            <person name="Rodriguez J.F."/>
            <person name="Vinuela E."/>
        </authorList>
    </citation>
    <scope>NUCLEOTIDE SEQUENCE [LARGE SCALE GENOMIC DNA]</scope>
</reference>
<reference key="2">
    <citation type="journal article" date="2013" name="Virus Res.">
        <title>African swine fever virus transcription.</title>
        <authorList>
            <person name="Rodriguez J.M."/>
            <person name="Salas M.L."/>
        </authorList>
    </citation>
    <scope>REVIEW</scope>
</reference>
<reference key="3">
    <citation type="journal article" date="2020" name="Biochem. Soc. Trans.">
        <title>Transcriptome view of a killer: African swine fever virus.</title>
        <authorList>
            <person name="Cackett G."/>
            <person name="Sykora M."/>
            <person name="Werner F."/>
        </authorList>
    </citation>
    <scope>REVIEW</scope>
</reference>
<gene>
    <name type="ordered locus">Ba71V-068</name>
    <name type="ORF">C315R</name>
</gene>
<accession>Q65160</accession>
<organism>
    <name type="scientific">African swine fever virus (strain Badajoz 1971 Vero-adapted)</name>
    <name type="common">Ba71V</name>
    <name type="synonym">ASFV</name>
    <dbReference type="NCBI Taxonomy" id="10498"/>
    <lineage>
        <taxon>Viruses</taxon>
        <taxon>Varidnaviria</taxon>
        <taxon>Bamfordvirae</taxon>
        <taxon>Nucleocytoviricota</taxon>
        <taxon>Pokkesviricetes</taxon>
        <taxon>Asfuvirales</taxon>
        <taxon>Asfarviridae</taxon>
        <taxon>Asfivirus</taxon>
        <taxon>African swine fever virus</taxon>
    </lineage>
</organism>
<dbReference type="EMBL" id="U18466">
    <property type="protein sequence ID" value="AAA65298.1"/>
    <property type="molecule type" value="Genomic_DNA"/>
</dbReference>
<dbReference type="RefSeq" id="NP_042762.1">
    <property type="nucleotide sequence ID" value="NC_001659.2"/>
</dbReference>
<dbReference type="GeneID" id="22220298"/>
<dbReference type="KEGG" id="vg:22220298"/>
<dbReference type="Proteomes" id="UP000000624">
    <property type="component" value="Segment"/>
</dbReference>
<evidence type="ECO:0000303" key="1">
    <source>
    </source>
</evidence>
<evidence type="ECO:0000303" key="2">
    <source>
    </source>
</evidence>
<evidence type="ECO:0000305" key="3"/>
<feature type="chain" id="PRO_0000373639" description="Initiation factor TFIIB homolog">
    <location>
        <begin position="1"/>
        <end position="315"/>
    </location>
</feature>
<organismHost>
    <name type="scientific">Ornithodoros</name>
    <name type="common">relapsing fever ticks</name>
    <dbReference type="NCBI Taxonomy" id="6937"/>
</organismHost>
<organismHost>
    <name type="scientific">Sus scrofa</name>
    <name type="common">Pig</name>
    <dbReference type="NCBI Taxonomy" id="9823"/>
</organismHost>
<proteinExistence type="inferred from homology"/>